<comment type="function">
    <text evidence="1">Binds directly to 16S ribosomal RNA.</text>
</comment>
<comment type="similarity">
    <text evidence="1">Belongs to the bacterial ribosomal protein bS20 family.</text>
</comment>
<organism>
    <name type="scientific">Mesomycoplasma hyopneumoniae (strain 7448)</name>
    <name type="common">Mycoplasma hyopneumoniae</name>
    <dbReference type="NCBI Taxonomy" id="262722"/>
    <lineage>
        <taxon>Bacteria</taxon>
        <taxon>Bacillati</taxon>
        <taxon>Mycoplasmatota</taxon>
        <taxon>Mycoplasmoidales</taxon>
        <taxon>Metamycoplasmataceae</taxon>
        <taxon>Mesomycoplasma</taxon>
    </lineage>
</organism>
<sequence length="90" mass="9925">MANIKSKIKSITKMQKARARNNAIKSRVKTAIKKAKIAISTDASNKSDLIAKAHSEISKAKSKGVFHKNKANRKISRLNLFANTYTTPAQ</sequence>
<evidence type="ECO:0000255" key="1">
    <source>
        <dbReference type="HAMAP-Rule" id="MF_00500"/>
    </source>
</evidence>
<evidence type="ECO:0000305" key="2"/>
<proteinExistence type="inferred from homology"/>
<dbReference type="EMBL" id="AE017244">
    <property type="protein sequence ID" value="AAZ53619.1"/>
    <property type="molecule type" value="Genomic_DNA"/>
</dbReference>
<dbReference type="RefSeq" id="WP_011205973.1">
    <property type="nucleotide sequence ID" value="NC_007332.1"/>
</dbReference>
<dbReference type="SMR" id="Q4A8C0"/>
<dbReference type="KEGG" id="mhp:MHP7448_0245"/>
<dbReference type="HOGENOM" id="CLU_160655_1_2_14"/>
<dbReference type="Proteomes" id="UP000000553">
    <property type="component" value="Chromosome"/>
</dbReference>
<dbReference type="GO" id="GO:0005829">
    <property type="term" value="C:cytosol"/>
    <property type="evidence" value="ECO:0007669"/>
    <property type="project" value="TreeGrafter"/>
</dbReference>
<dbReference type="GO" id="GO:0015935">
    <property type="term" value="C:small ribosomal subunit"/>
    <property type="evidence" value="ECO:0007669"/>
    <property type="project" value="TreeGrafter"/>
</dbReference>
<dbReference type="GO" id="GO:0070181">
    <property type="term" value="F:small ribosomal subunit rRNA binding"/>
    <property type="evidence" value="ECO:0007669"/>
    <property type="project" value="TreeGrafter"/>
</dbReference>
<dbReference type="GO" id="GO:0003735">
    <property type="term" value="F:structural constituent of ribosome"/>
    <property type="evidence" value="ECO:0007669"/>
    <property type="project" value="InterPro"/>
</dbReference>
<dbReference type="GO" id="GO:0006412">
    <property type="term" value="P:translation"/>
    <property type="evidence" value="ECO:0007669"/>
    <property type="project" value="UniProtKB-UniRule"/>
</dbReference>
<dbReference type="Gene3D" id="1.20.58.110">
    <property type="entry name" value="Ribosomal protein S20"/>
    <property type="match status" value="1"/>
</dbReference>
<dbReference type="HAMAP" id="MF_00500">
    <property type="entry name" value="Ribosomal_bS20"/>
    <property type="match status" value="1"/>
</dbReference>
<dbReference type="InterPro" id="IPR002583">
    <property type="entry name" value="Ribosomal_bS20"/>
</dbReference>
<dbReference type="InterPro" id="IPR036510">
    <property type="entry name" value="Ribosomal_bS20_sf"/>
</dbReference>
<dbReference type="NCBIfam" id="TIGR00029">
    <property type="entry name" value="S20"/>
    <property type="match status" value="1"/>
</dbReference>
<dbReference type="PANTHER" id="PTHR33398">
    <property type="entry name" value="30S RIBOSOMAL PROTEIN S20"/>
    <property type="match status" value="1"/>
</dbReference>
<dbReference type="PANTHER" id="PTHR33398:SF1">
    <property type="entry name" value="SMALL RIBOSOMAL SUBUNIT PROTEIN BS20C"/>
    <property type="match status" value="1"/>
</dbReference>
<dbReference type="Pfam" id="PF01649">
    <property type="entry name" value="Ribosomal_S20p"/>
    <property type="match status" value="1"/>
</dbReference>
<dbReference type="SUPFAM" id="SSF46992">
    <property type="entry name" value="Ribosomal protein S20"/>
    <property type="match status" value="1"/>
</dbReference>
<reference key="1">
    <citation type="journal article" date="2005" name="J. Bacteriol.">
        <title>Swine and poultry pathogens: the complete genome sequences of two strains of Mycoplasma hyopneumoniae and a strain of Mycoplasma synoviae.</title>
        <authorList>
            <person name="Vasconcelos A.T.R."/>
            <person name="Ferreira H.B."/>
            <person name="Bizarro C.V."/>
            <person name="Bonatto S.L."/>
            <person name="Carvalho M.O."/>
            <person name="Pinto P.M."/>
            <person name="Almeida D.F."/>
            <person name="Almeida L.G.P."/>
            <person name="Almeida R."/>
            <person name="Alves-Junior L."/>
            <person name="Assuncao E.N."/>
            <person name="Azevedo V.A.C."/>
            <person name="Bogo M.R."/>
            <person name="Brigido M.M."/>
            <person name="Brocchi M."/>
            <person name="Burity H.A."/>
            <person name="Camargo A.A."/>
            <person name="Camargo S.S."/>
            <person name="Carepo M.S."/>
            <person name="Carraro D.M."/>
            <person name="de Mattos Cascardo J.C."/>
            <person name="Castro L.A."/>
            <person name="Cavalcanti G."/>
            <person name="Chemale G."/>
            <person name="Collevatti R.G."/>
            <person name="Cunha C.W."/>
            <person name="Dallagiovanna B."/>
            <person name="Dambros B.P."/>
            <person name="Dellagostin O.A."/>
            <person name="Falcao C."/>
            <person name="Fantinatti-Garboggini F."/>
            <person name="Felipe M.S.S."/>
            <person name="Fiorentin L."/>
            <person name="Franco G.R."/>
            <person name="Freitas N.S.A."/>
            <person name="Frias D."/>
            <person name="Grangeiro T.B."/>
            <person name="Grisard E.C."/>
            <person name="Guimaraes C.T."/>
            <person name="Hungria M."/>
            <person name="Jardim S.N."/>
            <person name="Krieger M.A."/>
            <person name="Laurino J.P."/>
            <person name="Lima L.F.A."/>
            <person name="Lopes M.I."/>
            <person name="Loreto E.L.S."/>
            <person name="Madeira H.M.F."/>
            <person name="Manfio G.P."/>
            <person name="Maranhao A.Q."/>
            <person name="Martinkovics C.T."/>
            <person name="Medeiros S.R.B."/>
            <person name="Moreira M.A.M."/>
            <person name="Neiva M."/>
            <person name="Ramalho-Neto C.E."/>
            <person name="Nicolas M.F."/>
            <person name="Oliveira S.C."/>
            <person name="Paixao R.F.C."/>
            <person name="Pedrosa F.O."/>
            <person name="Pena S.D.J."/>
            <person name="Pereira M."/>
            <person name="Pereira-Ferrari L."/>
            <person name="Piffer I."/>
            <person name="Pinto L.S."/>
            <person name="Potrich D.P."/>
            <person name="Salim A.C.M."/>
            <person name="Santos F.R."/>
            <person name="Schmitt R."/>
            <person name="Schneider M.P.C."/>
            <person name="Schrank A."/>
            <person name="Schrank I.S."/>
            <person name="Schuck A.F."/>
            <person name="Seuanez H.N."/>
            <person name="Silva D.W."/>
            <person name="Silva R."/>
            <person name="Silva S.C."/>
            <person name="Soares C.M.A."/>
            <person name="Souza K.R.L."/>
            <person name="Souza R.C."/>
            <person name="Staats C.C."/>
            <person name="Steffens M.B.R."/>
            <person name="Teixeira S.M.R."/>
            <person name="Urmenyi T.P."/>
            <person name="Vainstein M.H."/>
            <person name="Zuccherato L.W."/>
            <person name="Simpson A.J.G."/>
            <person name="Zaha A."/>
        </authorList>
    </citation>
    <scope>NUCLEOTIDE SEQUENCE [LARGE SCALE GENOMIC DNA]</scope>
    <source>
        <strain>7448</strain>
    </source>
</reference>
<keyword id="KW-0687">Ribonucleoprotein</keyword>
<keyword id="KW-0689">Ribosomal protein</keyword>
<keyword id="KW-0694">RNA-binding</keyword>
<keyword id="KW-0699">rRNA-binding</keyword>
<gene>
    <name evidence="1" type="primary">rpsT</name>
    <name type="ordered locus">MHP7448_0245</name>
</gene>
<feature type="chain" id="PRO_0000224970" description="Small ribosomal subunit protein bS20">
    <location>
        <begin position="1"/>
        <end position="90"/>
    </location>
</feature>
<protein>
    <recommendedName>
        <fullName evidence="1">Small ribosomal subunit protein bS20</fullName>
    </recommendedName>
    <alternativeName>
        <fullName evidence="2">30S ribosomal protein S20</fullName>
    </alternativeName>
</protein>
<accession>Q4A8C0</accession>
<name>RS20_MESH7</name>